<evidence type="ECO:0000250" key="1">
    <source>
        <dbReference type="UniProtKB" id="P22337"/>
    </source>
</evidence>
<evidence type="ECO:0000250" key="2">
    <source>
        <dbReference type="UniProtKB" id="P9WNZ5"/>
    </source>
</evidence>
<evidence type="ECO:0000250" key="3">
    <source>
        <dbReference type="UniProtKB" id="P9WNZ7"/>
    </source>
</evidence>
<evidence type="ECO:0000256" key="4">
    <source>
        <dbReference type="SAM" id="MobiDB-lite"/>
    </source>
</evidence>
<evidence type="ECO:0000305" key="5"/>
<organism>
    <name type="scientific">Mycobacterium tuberculosis (strain CDC 1551 / Oshkosh)</name>
    <dbReference type="NCBI Taxonomy" id="83331"/>
    <lineage>
        <taxon>Bacteria</taxon>
        <taxon>Bacillati</taxon>
        <taxon>Actinomycetota</taxon>
        <taxon>Actinomycetes</taxon>
        <taxon>Mycobacteriales</taxon>
        <taxon>Mycobacteriaceae</taxon>
        <taxon>Mycobacterium</taxon>
        <taxon>Mycobacterium tuberculosis complex</taxon>
    </lineage>
</organism>
<feature type="chain" id="PRO_0000427040" description="Putative acyl-[acyl-carrier-protein] desaturase DesA1">
    <location>
        <begin position="1"/>
        <end position="338"/>
    </location>
</feature>
<feature type="region of interest" description="Disordered" evidence="4">
    <location>
        <begin position="314"/>
        <end position="338"/>
    </location>
</feature>
<feature type="compositionally biased region" description="Basic and acidic residues" evidence="4">
    <location>
        <begin position="314"/>
        <end position="328"/>
    </location>
</feature>
<feature type="binding site" evidence="1">
    <location>
        <position position="76"/>
    </location>
    <ligand>
        <name>Fe cation</name>
        <dbReference type="ChEBI" id="CHEBI:24875"/>
        <label>1</label>
    </ligand>
</feature>
<feature type="binding site" evidence="1">
    <location>
        <position position="107"/>
    </location>
    <ligand>
        <name>Fe cation</name>
        <dbReference type="ChEBI" id="CHEBI:24875"/>
        <label>1</label>
    </ligand>
</feature>
<feature type="binding site" evidence="1">
    <location>
        <position position="107"/>
    </location>
    <ligand>
        <name>Fe cation</name>
        <dbReference type="ChEBI" id="CHEBI:24875"/>
        <label>2</label>
    </ligand>
</feature>
<feature type="binding site" evidence="1">
    <location>
        <position position="110"/>
    </location>
    <ligand>
        <name>Fe cation</name>
        <dbReference type="ChEBI" id="CHEBI:24875"/>
        <label>1</label>
    </ligand>
</feature>
<feature type="binding site" evidence="1">
    <location>
        <position position="167"/>
    </location>
    <ligand>
        <name>Fe cation</name>
        <dbReference type="ChEBI" id="CHEBI:24875"/>
        <label>2</label>
    </ligand>
</feature>
<feature type="binding site" evidence="1">
    <location>
        <position position="197"/>
    </location>
    <ligand>
        <name>Fe cation</name>
        <dbReference type="ChEBI" id="CHEBI:24875"/>
        <label>1</label>
    </ligand>
</feature>
<feature type="binding site" evidence="1">
    <location>
        <position position="197"/>
    </location>
    <ligand>
        <name>Fe cation</name>
        <dbReference type="ChEBI" id="CHEBI:24875"/>
        <label>2</label>
    </ligand>
</feature>
<feature type="binding site" evidence="1">
    <location>
        <position position="200"/>
    </location>
    <ligand>
        <name>Fe cation</name>
        <dbReference type="ChEBI" id="CHEBI:24875"/>
        <label>2</label>
    </ligand>
</feature>
<accession>P9WNZ6</accession>
<accession>L0T7U2</accession>
<accession>Q50824</accession>
<accession>Q79FV9</accession>
<accession>Q8VKD4</accession>
<proteinExistence type="inferred from homology"/>
<keyword id="KW-0275">Fatty acid biosynthesis</keyword>
<keyword id="KW-0276">Fatty acid metabolism</keyword>
<keyword id="KW-0408">Iron</keyword>
<keyword id="KW-0444">Lipid biosynthesis</keyword>
<keyword id="KW-0443">Lipid metabolism</keyword>
<keyword id="KW-0479">Metal-binding</keyword>
<keyword id="KW-0560">Oxidoreductase</keyword>
<keyword id="KW-1185">Reference proteome</keyword>
<name>DESA1_MYCTO</name>
<sequence length="338" mass="38770">MSAKLTDLQLLHELEPVVEKYLNRHLSMHKPWNPHDYIPWSDGKNYYALGGQDWDPDQSKLSDVAQVAMVQNLVTEDNLPSYHREIAMNMGMDGAWGQWVNRWTAEENRHGIALRDYLVVTRSVDPVELEKLRLEVVNRGFSPGQNHQGHYFAESLTDSVLYVSFQELATRISHRNTGKACNDPVADQLMAKISADENLHMIFYRDVSEAAFDLVPNQAMKSLHLILSHFQMPGFQVPEFRRKAVVIAVGGVYDPRIHLDEVVMPVLKKWRIFEREDFTGEGAKLRDELALVIKDLELACDKFEVSKQRQLDREARTGKKVSAHELHKTAGKLAMSRR</sequence>
<gene>
    <name type="primary">desA1</name>
    <name type="synonym">des</name>
    <name type="ordered locus">MT0846</name>
</gene>
<reference key="1">
    <citation type="journal article" date="2002" name="J. Bacteriol.">
        <title>Whole-genome comparison of Mycobacterium tuberculosis clinical and laboratory strains.</title>
        <authorList>
            <person name="Fleischmann R.D."/>
            <person name="Alland D."/>
            <person name="Eisen J.A."/>
            <person name="Carpenter L."/>
            <person name="White O."/>
            <person name="Peterson J.D."/>
            <person name="DeBoy R.T."/>
            <person name="Dodson R.J."/>
            <person name="Gwinn M.L."/>
            <person name="Haft D.H."/>
            <person name="Hickey E.K."/>
            <person name="Kolonay J.F."/>
            <person name="Nelson W.C."/>
            <person name="Umayam L.A."/>
            <person name="Ermolaeva M.D."/>
            <person name="Salzberg S.L."/>
            <person name="Delcher A."/>
            <person name="Utterback T.R."/>
            <person name="Weidman J.F."/>
            <person name="Khouri H.M."/>
            <person name="Gill J."/>
            <person name="Mikula A."/>
            <person name="Bishai W."/>
            <person name="Jacobs W.R. Jr."/>
            <person name="Venter J.C."/>
            <person name="Fraser C.M."/>
        </authorList>
    </citation>
    <scope>NUCLEOTIDE SEQUENCE [LARGE SCALE GENOMIC DNA]</scope>
    <source>
        <strain>CDC 1551 / Oshkosh</strain>
    </source>
</reference>
<protein>
    <recommendedName>
        <fullName evidence="3">Putative acyl-[acyl-carrier-protein] desaturase DesA1</fullName>
        <shortName evidence="3">Putative acyl-ACP desaturase DesA1</shortName>
        <ecNumber evidence="3">1.14.19.-</ecNumber>
    </recommendedName>
</protein>
<dbReference type="EC" id="1.14.19.-" evidence="3"/>
<dbReference type="EMBL" id="AE000516">
    <property type="protein sequence ID" value="AAK45088.1"/>
    <property type="molecule type" value="Genomic_DNA"/>
</dbReference>
<dbReference type="PIR" id="H70810">
    <property type="entry name" value="H70810"/>
</dbReference>
<dbReference type="RefSeq" id="WP_003404321.1">
    <property type="nucleotide sequence ID" value="NZ_KK341227.1"/>
</dbReference>
<dbReference type="RefSeq" id="WP_010924303.1">
    <property type="nucleotide sequence ID" value="NC_002755.2"/>
</dbReference>
<dbReference type="SMR" id="P9WNZ6"/>
<dbReference type="GeneID" id="45424787"/>
<dbReference type="KEGG" id="mtc:MT0846"/>
<dbReference type="PATRIC" id="fig|83331.31.peg.905"/>
<dbReference type="HOGENOM" id="CLU_034505_3_0_11"/>
<dbReference type="UniPathway" id="UPA00199"/>
<dbReference type="Proteomes" id="UP000001020">
    <property type="component" value="Chromosome"/>
</dbReference>
<dbReference type="GO" id="GO:0009986">
    <property type="term" value="C:cell surface"/>
    <property type="evidence" value="ECO:0007669"/>
    <property type="project" value="UniProtKB-SubCell"/>
</dbReference>
<dbReference type="GO" id="GO:0005829">
    <property type="term" value="C:cytosol"/>
    <property type="evidence" value="ECO:0007669"/>
    <property type="project" value="TreeGrafter"/>
</dbReference>
<dbReference type="GO" id="GO:0046872">
    <property type="term" value="F:metal ion binding"/>
    <property type="evidence" value="ECO:0007669"/>
    <property type="project" value="UniProtKB-KW"/>
</dbReference>
<dbReference type="GO" id="GO:0045300">
    <property type="term" value="F:stearoyl-[ACP] desaturase activity"/>
    <property type="evidence" value="ECO:0007669"/>
    <property type="project" value="InterPro"/>
</dbReference>
<dbReference type="GO" id="GO:0006633">
    <property type="term" value="P:fatty acid biosynthetic process"/>
    <property type="evidence" value="ECO:0007669"/>
    <property type="project" value="UniProtKB-KW"/>
</dbReference>
<dbReference type="CDD" id="cd01050">
    <property type="entry name" value="Acyl_ACP_Desat"/>
    <property type="match status" value="1"/>
</dbReference>
<dbReference type="FunFam" id="1.10.620.20:FF:000006">
    <property type="entry name" value="Acyl-ACP desaturase DesA"/>
    <property type="match status" value="1"/>
</dbReference>
<dbReference type="Gene3D" id="1.10.620.20">
    <property type="entry name" value="Ribonucleotide Reductase, subunit A"/>
    <property type="match status" value="1"/>
</dbReference>
<dbReference type="InterPro" id="IPR005067">
    <property type="entry name" value="Fatty_acid_desaturase-2"/>
</dbReference>
<dbReference type="InterPro" id="IPR009078">
    <property type="entry name" value="Ferritin-like_SF"/>
</dbReference>
<dbReference type="InterPro" id="IPR012348">
    <property type="entry name" value="RNR-like"/>
</dbReference>
<dbReference type="PANTHER" id="PTHR31155">
    <property type="entry name" value="ACYL- ACYL-CARRIER-PROTEIN DESATURASE-RELATED"/>
    <property type="match status" value="1"/>
</dbReference>
<dbReference type="PANTHER" id="PTHR31155:SF9">
    <property type="entry name" value="STEAROYL-[ACYL-CARRIER-PROTEIN] 9-DESATURASE 7, CHLOROPLASTIC"/>
    <property type="match status" value="1"/>
</dbReference>
<dbReference type="Pfam" id="PF03405">
    <property type="entry name" value="FA_desaturase_2"/>
    <property type="match status" value="1"/>
</dbReference>
<dbReference type="PIRSF" id="PIRSF000346">
    <property type="entry name" value="Dlt9_acylACP_des"/>
    <property type="match status" value="1"/>
</dbReference>
<dbReference type="SUPFAM" id="SSF47240">
    <property type="entry name" value="Ferritin-like"/>
    <property type="match status" value="1"/>
</dbReference>
<comment type="function">
    <text evidence="3">May be a desaturase involved in mycobacterial fatty acid biosynthesis.</text>
</comment>
<comment type="cofactor">
    <cofactor evidence="1">
        <name>Fe(2+)</name>
        <dbReference type="ChEBI" id="CHEBI:29033"/>
    </cofactor>
    <text evidence="1">Binds 2 Fe(2+) ions per subunit.</text>
</comment>
<comment type="pathway">
    <text evidence="3">Lipid metabolism; fatty acid metabolism.</text>
</comment>
<comment type="subunit">
    <text evidence="2">Homodimer.</text>
</comment>
<comment type="subcellular location">
    <subcellularLocation>
        <location evidence="3">Cell surface</location>
    </subcellularLocation>
</comment>
<comment type="similarity">
    <text evidence="5">Belongs to the fatty acid desaturase type 2 family.</text>
</comment>